<gene>
    <name evidence="1" type="primary">grpE</name>
    <name type="ordered locus">BQ2027_MB0359</name>
</gene>
<accession>Q7U272</accession>
<accession>A0A1R3XX83</accession>
<accession>X2BET3</accession>
<proteinExistence type="inferred from homology"/>
<feature type="chain" id="PRO_0000113813" description="Protein GrpE">
    <location>
        <begin position="1"/>
        <end position="235"/>
    </location>
</feature>
<feature type="region of interest" description="Disordered" evidence="2">
    <location>
        <begin position="1"/>
        <end position="50"/>
    </location>
</feature>
<feature type="region of interest" description="Disordered" evidence="2">
    <location>
        <begin position="198"/>
        <end position="235"/>
    </location>
</feature>
<feature type="compositionally biased region" description="Polar residues" evidence="2">
    <location>
        <begin position="1"/>
        <end position="18"/>
    </location>
</feature>
<feature type="compositionally biased region" description="Basic and acidic residues" evidence="2">
    <location>
        <begin position="19"/>
        <end position="35"/>
    </location>
</feature>
<comment type="function">
    <text evidence="1">Participates actively in the response to hyperosmotic and heat shock by preventing the aggregation of stress-denatured proteins, in association with DnaK and GrpE. It is the nucleotide exchange factor for DnaK and may function as a thermosensor. Unfolded proteins bind initially to DnaJ; upon interaction with the DnaJ-bound protein, DnaK hydrolyzes its bound ATP, resulting in the formation of a stable complex. GrpE releases ADP from DnaK; ATP binding to DnaK triggers the release of the substrate protein, thus completing the reaction cycle. Several rounds of ATP-dependent interactions between DnaJ, DnaK and GrpE are required for fully efficient folding.</text>
</comment>
<comment type="subunit">
    <text evidence="1">Homodimer.</text>
</comment>
<comment type="subcellular location">
    <subcellularLocation>
        <location evidence="1">Cytoplasm</location>
    </subcellularLocation>
</comment>
<comment type="similarity">
    <text evidence="1">Belongs to the GrpE family.</text>
</comment>
<protein>
    <recommendedName>
        <fullName evidence="1">Protein GrpE</fullName>
    </recommendedName>
    <alternativeName>
        <fullName evidence="1">HSP-70 cofactor</fullName>
    </alternativeName>
</protein>
<dbReference type="EMBL" id="LT708304">
    <property type="protein sequence ID" value="SIT98915.1"/>
    <property type="molecule type" value="Genomic_DNA"/>
</dbReference>
<dbReference type="RefSeq" id="NP_854022.1">
    <property type="nucleotide sequence ID" value="NC_002945.3"/>
</dbReference>
<dbReference type="RefSeq" id="WP_010950385.1">
    <property type="nucleotide sequence ID" value="NC_002945.4"/>
</dbReference>
<dbReference type="SMR" id="Q7U272"/>
<dbReference type="PATRIC" id="fig|233413.5.peg.393"/>
<dbReference type="Proteomes" id="UP000001419">
    <property type="component" value="Chromosome"/>
</dbReference>
<dbReference type="GO" id="GO:0005737">
    <property type="term" value="C:cytoplasm"/>
    <property type="evidence" value="ECO:0007669"/>
    <property type="project" value="UniProtKB-SubCell"/>
</dbReference>
<dbReference type="GO" id="GO:0000774">
    <property type="term" value="F:adenyl-nucleotide exchange factor activity"/>
    <property type="evidence" value="ECO:0007669"/>
    <property type="project" value="InterPro"/>
</dbReference>
<dbReference type="GO" id="GO:0042803">
    <property type="term" value="F:protein homodimerization activity"/>
    <property type="evidence" value="ECO:0007669"/>
    <property type="project" value="InterPro"/>
</dbReference>
<dbReference type="GO" id="GO:0051087">
    <property type="term" value="F:protein-folding chaperone binding"/>
    <property type="evidence" value="ECO:0007669"/>
    <property type="project" value="InterPro"/>
</dbReference>
<dbReference type="GO" id="GO:0051082">
    <property type="term" value="F:unfolded protein binding"/>
    <property type="evidence" value="ECO:0007669"/>
    <property type="project" value="TreeGrafter"/>
</dbReference>
<dbReference type="GO" id="GO:0006457">
    <property type="term" value="P:protein folding"/>
    <property type="evidence" value="ECO:0007669"/>
    <property type="project" value="InterPro"/>
</dbReference>
<dbReference type="CDD" id="cd00446">
    <property type="entry name" value="GrpE"/>
    <property type="match status" value="1"/>
</dbReference>
<dbReference type="FunFam" id="2.30.22.10:FF:000007">
    <property type="entry name" value="Protein GrpE"/>
    <property type="match status" value="1"/>
</dbReference>
<dbReference type="FunFam" id="3.90.20.20:FF:000010">
    <property type="entry name" value="Protein GrpE"/>
    <property type="match status" value="1"/>
</dbReference>
<dbReference type="Gene3D" id="3.90.20.20">
    <property type="match status" value="1"/>
</dbReference>
<dbReference type="Gene3D" id="2.30.22.10">
    <property type="entry name" value="Head domain of nucleotide exchange factor GrpE"/>
    <property type="match status" value="1"/>
</dbReference>
<dbReference type="HAMAP" id="MF_01151">
    <property type="entry name" value="GrpE"/>
    <property type="match status" value="1"/>
</dbReference>
<dbReference type="InterPro" id="IPR000740">
    <property type="entry name" value="GrpE"/>
</dbReference>
<dbReference type="InterPro" id="IPR013805">
    <property type="entry name" value="GrpE_coiled_coil"/>
</dbReference>
<dbReference type="InterPro" id="IPR009012">
    <property type="entry name" value="GrpE_head"/>
</dbReference>
<dbReference type="NCBIfam" id="NF010740">
    <property type="entry name" value="PRK14142.1"/>
    <property type="match status" value="1"/>
</dbReference>
<dbReference type="NCBIfam" id="NF010761">
    <property type="entry name" value="PRK14164.1"/>
    <property type="match status" value="1"/>
</dbReference>
<dbReference type="PANTHER" id="PTHR21237">
    <property type="entry name" value="GRPE PROTEIN"/>
    <property type="match status" value="1"/>
</dbReference>
<dbReference type="PANTHER" id="PTHR21237:SF23">
    <property type="entry name" value="GRPE PROTEIN HOMOLOG, MITOCHONDRIAL"/>
    <property type="match status" value="1"/>
</dbReference>
<dbReference type="Pfam" id="PF01025">
    <property type="entry name" value="GrpE"/>
    <property type="match status" value="1"/>
</dbReference>
<dbReference type="PRINTS" id="PR00773">
    <property type="entry name" value="GRPEPROTEIN"/>
</dbReference>
<dbReference type="SUPFAM" id="SSF58014">
    <property type="entry name" value="Coiled-coil domain of nucleotide exchange factor GrpE"/>
    <property type="match status" value="1"/>
</dbReference>
<dbReference type="SUPFAM" id="SSF51064">
    <property type="entry name" value="Head domain of nucleotide exchange factor GrpE"/>
    <property type="match status" value="1"/>
</dbReference>
<dbReference type="PROSITE" id="PS01071">
    <property type="entry name" value="GRPE"/>
    <property type="match status" value="1"/>
</dbReference>
<reference key="1">
    <citation type="journal article" date="2003" name="Proc. Natl. Acad. Sci. U.S.A.">
        <title>The complete genome sequence of Mycobacterium bovis.</title>
        <authorList>
            <person name="Garnier T."/>
            <person name="Eiglmeier K."/>
            <person name="Camus J.-C."/>
            <person name="Medina N."/>
            <person name="Mansoor H."/>
            <person name="Pryor M."/>
            <person name="Duthoy S."/>
            <person name="Grondin S."/>
            <person name="Lacroix C."/>
            <person name="Monsempe C."/>
            <person name="Simon S."/>
            <person name="Harris B."/>
            <person name="Atkin R."/>
            <person name="Doggett J."/>
            <person name="Mayes R."/>
            <person name="Keating L."/>
            <person name="Wheeler P.R."/>
            <person name="Parkhill J."/>
            <person name="Barrell B.G."/>
            <person name="Cole S.T."/>
            <person name="Gordon S.V."/>
            <person name="Hewinson R.G."/>
        </authorList>
    </citation>
    <scope>NUCLEOTIDE SEQUENCE [LARGE SCALE GENOMIC DNA]</scope>
    <source>
        <strain>ATCC BAA-935 / AF2122/97</strain>
    </source>
</reference>
<reference key="2">
    <citation type="journal article" date="2017" name="Genome Announc.">
        <title>Updated reference genome sequence and annotation of Mycobacterium bovis AF2122/97.</title>
        <authorList>
            <person name="Malone K.M."/>
            <person name="Farrell D."/>
            <person name="Stuber T.P."/>
            <person name="Schubert O.T."/>
            <person name="Aebersold R."/>
            <person name="Robbe-Austerman S."/>
            <person name="Gordon S.V."/>
        </authorList>
    </citation>
    <scope>NUCLEOTIDE SEQUENCE [LARGE SCALE GENOMIC DNA]</scope>
    <scope>GENOME REANNOTATION</scope>
    <source>
        <strain>ATCC BAA-935 / AF2122/97</strain>
    </source>
</reference>
<keyword id="KW-0143">Chaperone</keyword>
<keyword id="KW-0963">Cytoplasm</keyword>
<keyword id="KW-1185">Reference proteome</keyword>
<keyword id="KW-0346">Stress response</keyword>
<sequence>MTDGNQKPDGNSGEQVTVTDKRRIDPETGEVRHVPPGDMPGGTAAADAAHTEDKVAELTADLQRVQADFANYRKRALRDQQAAADRAKASVVSQLLGVLDDLERARKHGDLESGPLKSVADKLDSALTGLGLVAFGAEGEDFDPVLHEAVQHEGDGGQGSKPVIGTVMRQGYQLGEQVLRHALVGVVDTVVVDAAELESVDDGTAVADTAENDQADQGNSADTLGEQAESEPSGS</sequence>
<evidence type="ECO:0000255" key="1">
    <source>
        <dbReference type="HAMAP-Rule" id="MF_01151"/>
    </source>
</evidence>
<evidence type="ECO:0000256" key="2">
    <source>
        <dbReference type="SAM" id="MobiDB-lite"/>
    </source>
</evidence>
<organism>
    <name type="scientific">Mycobacterium bovis (strain ATCC BAA-935 / AF2122/97)</name>
    <dbReference type="NCBI Taxonomy" id="233413"/>
    <lineage>
        <taxon>Bacteria</taxon>
        <taxon>Bacillati</taxon>
        <taxon>Actinomycetota</taxon>
        <taxon>Actinomycetes</taxon>
        <taxon>Mycobacteriales</taxon>
        <taxon>Mycobacteriaceae</taxon>
        <taxon>Mycobacterium</taxon>
        <taxon>Mycobacterium tuberculosis complex</taxon>
    </lineage>
</organism>
<name>GRPE_MYCBO</name>